<gene>
    <name evidence="1" type="primary">rplU</name>
    <name type="ordered locus">Bcep18194_A3666</name>
</gene>
<protein>
    <recommendedName>
        <fullName evidence="1">Large ribosomal subunit protein bL21</fullName>
    </recommendedName>
    <alternativeName>
        <fullName evidence="2">50S ribosomal protein L21</fullName>
    </alternativeName>
</protein>
<organism>
    <name type="scientific">Burkholderia lata (strain ATCC 17760 / DSM 23089 / LMG 22485 / NCIMB 9086 / R18194 / 383)</name>
    <dbReference type="NCBI Taxonomy" id="482957"/>
    <lineage>
        <taxon>Bacteria</taxon>
        <taxon>Pseudomonadati</taxon>
        <taxon>Pseudomonadota</taxon>
        <taxon>Betaproteobacteria</taxon>
        <taxon>Burkholderiales</taxon>
        <taxon>Burkholderiaceae</taxon>
        <taxon>Burkholderia</taxon>
        <taxon>Burkholderia cepacia complex</taxon>
    </lineage>
</organism>
<dbReference type="EMBL" id="CP000151">
    <property type="protein sequence ID" value="ABB07267.1"/>
    <property type="molecule type" value="Genomic_DNA"/>
</dbReference>
<dbReference type="RefSeq" id="WP_006025184.1">
    <property type="nucleotide sequence ID" value="NZ_LDWP01000069.1"/>
</dbReference>
<dbReference type="SMR" id="Q39JU9"/>
<dbReference type="GeneID" id="98106574"/>
<dbReference type="KEGG" id="bur:Bcep18194_A3666"/>
<dbReference type="HOGENOM" id="CLU_061463_3_1_4"/>
<dbReference type="Proteomes" id="UP000002705">
    <property type="component" value="Chromosome 1"/>
</dbReference>
<dbReference type="GO" id="GO:0005737">
    <property type="term" value="C:cytoplasm"/>
    <property type="evidence" value="ECO:0007669"/>
    <property type="project" value="UniProtKB-ARBA"/>
</dbReference>
<dbReference type="GO" id="GO:1990904">
    <property type="term" value="C:ribonucleoprotein complex"/>
    <property type="evidence" value="ECO:0007669"/>
    <property type="project" value="UniProtKB-KW"/>
</dbReference>
<dbReference type="GO" id="GO:0005840">
    <property type="term" value="C:ribosome"/>
    <property type="evidence" value="ECO:0007669"/>
    <property type="project" value="UniProtKB-KW"/>
</dbReference>
<dbReference type="GO" id="GO:0019843">
    <property type="term" value="F:rRNA binding"/>
    <property type="evidence" value="ECO:0007669"/>
    <property type="project" value="UniProtKB-UniRule"/>
</dbReference>
<dbReference type="GO" id="GO:0003735">
    <property type="term" value="F:structural constituent of ribosome"/>
    <property type="evidence" value="ECO:0007669"/>
    <property type="project" value="InterPro"/>
</dbReference>
<dbReference type="GO" id="GO:0006412">
    <property type="term" value="P:translation"/>
    <property type="evidence" value="ECO:0007669"/>
    <property type="project" value="UniProtKB-UniRule"/>
</dbReference>
<dbReference type="HAMAP" id="MF_01363">
    <property type="entry name" value="Ribosomal_bL21"/>
    <property type="match status" value="1"/>
</dbReference>
<dbReference type="InterPro" id="IPR028909">
    <property type="entry name" value="bL21-like"/>
</dbReference>
<dbReference type="InterPro" id="IPR036164">
    <property type="entry name" value="bL21-like_sf"/>
</dbReference>
<dbReference type="InterPro" id="IPR001787">
    <property type="entry name" value="Ribosomal_bL21"/>
</dbReference>
<dbReference type="InterPro" id="IPR018258">
    <property type="entry name" value="Ribosomal_bL21_CS"/>
</dbReference>
<dbReference type="NCBIfam" id="TIGR00061">
    <property type="entry name" value="L21"/>
    <property type="match status" value="1"/>
</dbReference>
<dbReference type="PANTHER" id="PTHR21349">
    <property type="entry name" value="50S RIBOSOMAL PROTEIN L21"/>
    <property type="match status" value="1"/>
</dbReference>
<dbReference type="PANTHER" id="PTHR21349:SF0">
    <property type="entry name" value="LARGE RIBOSOMAL SUBUNIT PROTEIN BL21M"/>
    <property type="match status" value="1"/>
</dbReference>
<dbReference type="Pfam" id="PF00829">
    <property type="entry name" value="Ribosomal_L21p"/>
    <property type="match status" value="1"/>
</dbReference>
<dbReference type="SUPFAM" id="SSF141091">
    <property type="entry name" value="L21p-like"/>
    <property type="match status" value="1"/>
</dbReference>
<dbReference type="PROSITE" id="PS01169">
    <property type="entry name" value="RIBOSOMAL_L21"/>
    <property type="match status" value="1"/>
</dbReference>
<keyword id="KW-0687">Ribonucleoprotein</keyword>
<keyword id="KW-0689">Ribosomal protein</keyword>
<keyword id="KW-0694">RNA-binding</keyword>
<keyword id="KW-0699">rRNA-binding</keyword>
<proteinExistence type="inferred from homology"/>
<feature type="chain" id="PRO_0000269296" description="Large ribosomal subunit protein bL21">
    <location>
        <begin position="1"/>
        <end position="103"/>
    </location>
</feature>
<name>RL21_BURL3</name>
<reference key="1">
    <citation type="submission" date="2005-10" db="EMBL/GenBank/DDBJ databases">
        <title>Complete sequence of chromosome 1 of Burkholderia sp. 383.</title>
        <authorList>
            <consortium name="US DOE Joint Genome Institute"/>
            <person name="Copeland A."/>
            <person name="Lucas S."/>
            <person name="Lapidus A."/>
            <person name="Barry K."/>
            <person name="Detter J.C."/>
            <person name="Glavina T."/>
            <person name="Hammon N."/>
            <person name="Israni S."/>
            <person name="Pitluck S."/>
            <person name="Chain P."/>
            <person name="Malfatti S."/>
            <person name="Shin M."/>
            <person name="Vergez L."/>
            <person name="Schmutz J."/>
            <person name="Larimer F."/>
            <person name="Land M."/>
            <person name="Kyrpides N."/>
            <person name="Lykidis A."/>
            <person name="Richardson P."/>
        </authorList>
    </citation>
    <scope>NUCLEOTIDE SEQUENCE [LARGE SCALE GENOMIC DNA]</scope>
    <source>
        <strain>ATCC 17760 / DSM 23089 / LMG 22485 / NCIMB 9086 / R18194 / 383</strain>
    </source>
</reference>
<evidence type="ECO:0000255" key="1">
    <source>
        <dbReference type="HAMAP-Rule" id="MF_01363"/>
    </source>
</evidence>
<evidence type="ECO:0000305" key="2"/>
<comment type="function">
    <text evidence="1">This protein binds to 23S rRNA in the presence of protein L20.</text>
</comment>
<comment type="subunit">
    <text evidence="1">Part of the 50S ribosomal subunit. Contacts protein L20.</text>
</comment>
<comment type="similarity">
    <text evidence="1">Belongs to the bacterial ribosomal protein bL21 family.</text>
</comment>
<sequence length="103" mass="11356">MYAVIKTGGKQYKVAVGEKLKVEQIPADIDAEITLDQVLAVGEGESIKFGTPLVSGASVKATVVSHGRHAKVTIFKMRRRKHYQKHGGHRQNYTELRIDAINA</sequence>
<accession>Q39JU9</accession>